<keyword id="KW-0732">Signal</keyword>
<keyword id="KW-0883">Thioether bond</keyword>
<protein>
    <recommendedName>
        <fullName>Lanthionine-containing peptide SapB</fullName>
    </recommendedName>
    <alternativeName>
        <fullName>Morphogen SapB</fullName>
    </alternativeName>
    <alternativeName>
        <fullName>Rapid aerial mycelium protein S</fullName>
    </alternativeName>
    <alternativeName>
        <fullName>Spore-associated protein B</fullName>
    </alternativeName>
</protein>
<reference key="1">
    <citation type="journal article" date="2000" name="J. Mol. Microbiol. Biotechnol.">
        <title>The ram-dependence of Streptomyces lividans differentiation is bypassed by copper.</title>
        <authorList>
            <person name="Keijser B.J."/>
            <person name="van Wezel G.P."/>
            <person name="Canters G.W."/>
            <person name="Kieser T."/>
            <person name="Vijgenboom E."/>
        </authorList>
    </citation>
    <scope>NUCLEOTIDE SEQUENCE [GENOMIC DNA]</scope>
    <source>
        <strain>66 / 1326</strain>
    </source>
</reference>
<proteinExistence type="inferred from homology"/>
<comment type="function">
    <text evidence="1">Lanthionine-containing peptide devoid of antibiotic properties, involved in the formation of aerial mycelium. Suggested to self-assemble at air-water interfaces, thus providing a film of surfactant through which nascent aerial hyphae can emerge. The aerial hyphae differentiate further into spores (By similarity).</text>
</comment>
<comment type="PTM">
    <text>Maturation involves the enzymatic conversion of Ser into dehydrated AA and the formation of thioether bonds with cysteine. This is followed by membrane translocation and cleavage of the modified precursor.</text>
</comment>
<comment type="similarity">
    <text evidence="3">Belongs to the lanthionine-containing morphogen protein family.</text>
</comment>
<evidence type="ECO:0000250" key="1"/>
<evidence type="ECO:0000256" key="2">
    <source>
        <dbReference type="SAM" id="MobiDB-lite"/>
    </source>
</evidence>
<evidence type="ECO:0000305" key="3"/>
<name>LANSB_STRLI</name>
<organism>
    <name type="scientific">Streptomyces lividans</name>
    <dbReference type="NCBI Taxonomy" id="1916"/>
    <lineage>
        <taxon>Bacteria</taxon>
        <taxon>Bacillati</taxon>
        <taxon>Actinomycetota</taxon>
        <taxon>Actinomycetes</taxon>
        <taxon>Kitasatosporales</taxon>
        <taxon>Streptomycetaceae</taxon>
        <taxon>Streptomyces</taxon>
    </lineage>
</organism>
<sequence length="42" mass="4496">MNLFDLQSMETPKEEAMGDVETGSRASLLLCGDSSLSITTCN</sequence>
<dbReference type="EMBL" id="AF139177">
    <property type="protein sequence ID" value="AAD33774.1"/>
    <property type="molecule type" value="Genomic_DNA"/>
</dbReference>
<dbReference type="InterPro" id="IPR045825">
    <property type="entry name" value="RamS"/>
</dbReference>
<dbReference type="NCBIfam" id="NF033212">
    <property type="entry name" value="SapB_AmfS_lanti"/>
    <property type="match status" value="1"/>
</dbReference>
<dbReference type="Pfam" id="PF19402">
    <property type="entry name" value="RamS"/>
    <property type="match status" value="1"/>
</dbReference>
<feature type="signal peptide" evidence="1">
    <location>
        <begin position="1"/>
        <end position="21"/>
    </location>
</feature>
<feature type="peptide" id="PRO_0000342632" description="Lanthionine-containing peptide SapB">
    <location>
        <begin position="22"/>
        <end position="42"/>
    </location>
</feature>
<feature type="region of interest" description="Disordered" evidence="2">
    <location>
        <begin position="1"/>
        <end position="21"/>
    </location>
</feature>
<feature type="modified residue" description="2,3-didehydroalanine (Ser)" evidence="1">
    <location>
        <position position="27"/>
    </location>
</feature>
<feature type="modified residue" description="2,3-didehydroalanine (Ser)" evidence="1">
    <location>
        <position position="37"/>
    </location>
</feature>
<feature type="cross-link" description="Lanthionine (Ser-Cys)" evidence="1">
    <location>
        <begin position="24"/>
        <end position="31"/>
    </location>
</feature>
<feature type="cross-link" description="Lanthionine (Ser-Cys)" evidence="1">
    <location>
        <begin position="34"/>
        <end position="41"/>
    </location>
</feature>
<accession>Q7BQR2</accession>
<gene>
    <name type="primary">ramS</name>
</gene>